<protein>
    <recommendedName>
        <fullName>Chaperone protein ClpB</fullName>
    </recommendedName>
</protein>
<organism>
    <name type="scientific">Corynebacterium efficiens (strain DSM 44549 / YS-314 / AJ 12310 / JCM 11189 / NBRC 100395)</name>
    <dbReference type="NCBI Taxonomy" id="196164"/>
    <lineage>
        <taxon>Bacteria</taxon>
        <taxon>Bacillati</taxon>
        <taxon>Actinomycetota</taxon>
        <taxon>Actinomycetes</taxon>
        <taxon>Mycobacteriales</taxon>
        <taxon>Corynebacteriaceae</taxon>
        <taxon>Corynebacterium</taxon>
    </lineage>
</organism>
<name>CLPB_COREF</name>
<sequence>MSSFNPTTKTSEAMQAALQQASANGNPDIRPAHLLVAILDQADGVAAPVLTAAGVDPKTILAEAQKLVDGYPKASGSNLANPNFNRDALNALTASQELAGELGDEYVSTEVLLAGIARGKSDAADLLKGKGATYDAIKAAFQSVRGSQKVTSQDPEGQFQALEKYSTDLTKLAREGKIDPVIGRDQEIRRVVQVLSRRTKNNPVLIGEPGVGKTAIVEGLARRIVAGDVPESLKGKTLISLDLGSMVAGAKYRGEFEERLKAVLDEIKGANGEIVTFIDELHTIVGAGASGESAMDAGNMIKPLLARGELRLVGATTLNEYRKYIEKDTALERRFQQVYVGEPSVEDTVGILRGLKERYEVHHGVRIQDSALVAAAELSHRYITSRFLPDKAIDLVDEAASRLRMEIDSSPQEIDELERIVRRLEIEEVALTKETDVASRERLERLRSELADEREKLSELKARWQNEKAVIDDVRKFKEELEALRSESDIAEREGDYGRVAELRYGRIPELEKKIAEAEEKIGGADNSMLTEEVTPEVIAEVVSAWTGIPAGKMMQGETEKLLNMERFLGKRVVGQHEAVTAVSDAVRRSRAGVADPNRPTGSFLFLGPTGVGKTELAKAVSEFLFDDERAMVRIDMSEYSEKHSVARLVGAPPGYVGYDQGGQLTEAVRRRPYTTVLFDEVEKAHPDVFDILLQVLDDGRLTDGQGRTVDFRNTILILTSNLGAGGTREQMMDAVKMAFKPEFINRLDDIVVFDPLSQEQLASIVEIQISQLAERLSDRRLTLRVSDAAKLWLAERGYDPAYGARPLRRLIQQAIGDQLAKELLAGEIRDGDRVLVDVADGGQYLAVSREH</sequence>
<keyword id="KW-0067">ATP-binding</keyword>
<keyword id="KW-0143">Chaperone</keyword>
<keyword id="KW-0175">Coiled coil</keyword>
<keyword id="KW-0963">Cytoplasm</keyword>
<keyword id="KW-0547">Nucleotide-binding</keyword>
<keyword id="KW-1185">Reference proteome</keyword>
<keyword id="KW-0677">Repeat</keyword>
<keyword id="KW-0346">Stress response</keyword>
<proteinExistence type="inferred from homology"/>
<comment type="function">
    <text evidence="1">Part of a stress-induced multi-chaperone system, it is involved in the recovery of the cell from heat-induced damage, in cooperation with DnaK, DnaJ and GrpE. Acts before DnaK, in the processing of protein aggregates. Protein binding stimulates the ATPase activity; ATP hydrolysis unfolds the denatured protein aggregates, which probably helps expose new hydrophobic binding sites on the surface of ClpB-bound aggregates, contributing to the solubilization and refolding of denatured protein aggregates by DnaK (By similarity).</text>
</comment>
<comment type="subunit">
    <text evidence="1">Homohexamer. The oligomerization is ATP-dependent (By similarity).</text>
</comment>
<comment type="subcellular location">
    <subcellularLocation>
        <location evidence="3">Cytoplasm</location>
    </subcellularLocation>
</comment>
<comment type="domain">
    <text evidence="1">The Clp repeat (R) domain probably functions as a substrate-discriminating domain, recruiting aggregated proteins to the ClpB hexamer and/or stabilizing bound proteins. The NBD2 domain is responsible for oligomerization, whereas the NBD1 domain stabilizes the hexamer probably in an ATP-dependent manner. The movement of the coiled-coil domain is essential for ClpB ability to rescue proteins from an aggregated state, probably by pulling apart large aggregated proteins, which are bound between the coiled-coils motifs of adjacent ClpB subunits in the functional hexamer (By similarity).</text>
</comment>
<comment type="similarity">
    <text evidence="3">Belongs to the ClpA/ClpB family.</text>
</comment>
<dbReference type="EMBL" id="BA000035">
    <property type="protein sequence ID" value="BAC19423.1"/>
    <property type="molecule type" value="Genomic_DNA"/>
</dbReference>
<dbReference type="RefSeq" id="WP_011076009.1">
    <property type="nucleotide sequence ID" value="NC_004369.1"/>
</dbReference>
<dbReference type="SMR" id="Q8FM94"/>
<dbReference type="STRING" id="196164.gene:10743060"/>
<dbReference type="KEGG" id="cef:CE2613"/>
<dbReference type="eggNOG" id="COG0542">
    <property type="taxonomic scope" value="Bacteria"/>
</dbReference>
<dbReference type="HOGENOM" id="CLU_005070_4_0_11"/>
<dbReference type="OrthoDB" id="9803641at2"/>
<dbReference type="Proteomes" id="UP000001409">
    <property type="component" value="Chromosome"/>
</dbReference>
<dbReference type="GO" id="GO:0005737">
    <property type="term" value="C:cytoplasm"/>
    <property type="evidence" value="ECO:0007669"/>
    <property type="project" value="UniProtKB-SubCell"/>
</dbReference>
<dbReference type="GO" id="GO:0005524">
    <property type="term" value="F:ATP binding"/>
    <property type="evidence" value="ECO:0007669"/>
    <property type="project" value="UniProtKB-KW"/>
</dbReference>
<dbReference type="GO" id="GO:0016887">
    <property type="term" value="F:ATP hydrolysis activity"/>
    <property type="evidence" value="ECO:0007669"/>
    <property type="project" value="InterPro"/>
</dbReference>
<dbReference type="GO" id="GO:0034605">
    <property type="term" value="P:cellular response to heat"/>
    <property type="evidence" value="ECO:0007669"/>
    <property type="project" value="TreeGrafter"/>
</dbReference>
<dbReference type="GO" id="GO:0042026">
    <property type="term" value="P:protein refolding"/>
    <property type="evidence" value="ECO:0007669"/>
    <property type="project" value="InterPro"/>
</dbReference>
<dbReference type="CDD" id="cd00009">
    <property type="entry name" value="AAA"/>
    <property type="match status" value="1"/>
</dbReference>
<dbReference type="CDD" id="cd19499">
    <property type="entry name" value="RecA-like_ClpB_Hsp104-like"/>
    <property type="match status" value="1"/>
</dbReference>
<dbReference type="FunFam" id="1.10.8.60:FF:000017">
    <property type="entry name" value="ATP-dependent chaperone ClpB"/>
    <property type="match status" value="1"/>
</dbReference>
<dbReference type="FunFam" id="3.40.50.300:FF:000120">
    <property type="entry name" value="ATP-dependent chaperone ClpB"/>
    <property type="match status" value="1"/>
</dbReference>
<dbReference type="FunFam" id="3.40.50.300:FF:000025">
    <property type="entry name" value="ATP-dependent Clp protease subunit"/>
    <property type="match status" value="1"/>
</dbReference>
<dbReference type="FunFam" id="3.40.50.300:FF:000010">
    <property type="entry name" value="Chaperone clpB 1, putative"/>
    <property type="match status" value="1"/>
</dbReference>
<dbReference type="Gene3D" id="1.10.8.60">
    <property type="match status" value="1"/>
</dbReference>
<dbReference type="Gene3D" id="1.10.1780.10">
    <property type="entry name" value="Clp, N-terminal domain"/>
    <property type="match status" value="1"/>
</dbReference>
<dbReference type="Gene3D" id="3.40.50.300">
    <property type="entry name" value="P-loop containing nucleotide triphosphate hydrolases"/>
    <property type="match status" value="3"/>
</dbReference>
<dbReference type="InterPro" id="IPR003593">
    <property type="entry name" value="AAA+_ATPase"/>
</dbReference>
<dbReference type="InterPro" id="IPR003959">
    <property type="entry name" value="ATPase_AAA_core"/>
</dbReference>
<dbReference type="InterPro" id="IPR017730">
    <property type="entry name" value="Chaperonin_ClpB"/>
</dbReference>
<dbReference type="InterPro" id="IPR019489">
    <property type="entry name" value="Clp_ATPase_C"/>
</dbReference>
<dbReference type="InterPro" id="IPR036628">
    <property type="entry name" value="Clp_N_dom_sf"/>
</dbReference>
<dbReference type="InterPro" id="IPR004176">
    <property type="entry name" value="Clp_R_dom"/>
</dbReference>
<dbReference type="InterPro" id="IPR001270">
    <property type="entry name" value="ClpA/B"/>
</dbReference>
<dbReference type="InterPro" id="IPR018368">
    <property type="entry name" value="ClpA/B_CS1"/>
</dbReference>
<dbReference type="InterPro" id="IPR028299">
    <property type="entry name" value="ClpA/B_CS2"/>
</dbReference>
<dbReference type="InterPro" id="IPR041546">
    <property type="entry name" value="ClpA/ClpB_AAA_lid"/>
</dbReference>
<dbReference type="InterPro" id="IPR050130">
    <property type="entry name" value="ClpA_ClpB"/>
</dbReference>
<dbReference type="InterPro" id="IPR027417">
    <property type="entry name" value="P-loop_NTPase"/>
</dbReference>
<dbReference type="NCBIfam" id="TIGR03346">
    <property type="entry name" value="chaperone_ClpB"/>
    <property type="match status" value="1"/>
</dbReference>
<dbReference type="PANTHER" id="PTHR11638">
    <property type="entry name" value="ATP-DEPENDENT CLP PROTEASE"/>
    <property type="match status" value="1"/>
</dbReference>
<dbReference type="PANTHER" id="PTHR11638:SF18">
    <property type="entry name" value="HEAT SHOCK PROTEIN 104"/>
    <property type="match status" value="1"/>
</dbReference>
<dbReference type="Pfam" id="PF00004">
    <property type="entry name" value="AAA"/>
    <property type="match status" value="1"/>
</dbReference>
<dbReference type="Pfam" id="PF07724">
    <property type="entry name" value="AAA_2"/>
    <property type="match status" value="1"/>
</dbReference>
<dbReference type="Pfam" id="PF17871">
    <property type="entry name" value="AAA_lid_9"/>
    <property type="match status" value="1"/>
</dbReference>
<dbReference type="Pfam" id="PF02861">
    <property type="entry name" value="Clp_N"/>
    <property type="match status" value="2"/>
</dbReference>
<dbReference type="Pfam" id="PF10431">
    <property type="entry name" value="ClpB_D2-small"/>
    <property type="match status" value="1"/>
</dbReference>
<dbReference type="PRINTS" id="PR00300">
    <property type="entry name" value="CLPPROTEASEA"/>
</dbReference>
<dbReference type="SMART" id="SM00382">
    <property type="entry name" value="AAA"/>
    <property type="match status" value="2"/>
</dbReference>
<dbReference type="SMART" id="SM01086">
    <property type="entry name" value="ClpB_D2-small"/>
    <property type="match status" value="1"/>
</dbReference>
<dbReference type="SUPFAM" id="SSF81923">
    <property type="entry name" value="Double Clp-N motif"/>
    <property type="match status" value="1"/>
</dbReference>
<dbReference type="SUPFAM" id="SSF52540">
    <property type="entry name" value="P-loop containing nucleoside triphosphate hydrolases"/>
    <property type="match status" value="2"/>
</dbReference>
<dbReference type="PROSITE" id="PS51903">
    <property type="entry name" value="CLP_R"/>
    <property type="match status" value="1"/>
</dbReference>
<dbReference type="PROSITE" id="PS00870">
    <property type="entry name" value="CLPAB_1"/>
    <property type="match status" value="1"/>
</dbReference>
<dbReference type="PROSITE" id="PS00871">
    <property type="entry name" value="CLPAB_2"/>
    <property type="match status" value="1"/>
</dbReference>
<evidence type="ECO:0000250" key="1"/>
<evidence type="ECO:0000255" key="2">
    <source>
        <dbReference type="PROSITE-ProRule" id="PRU01251"/>
    </source>
</evidence>
<evidence type="ECO:0000305" key="3"/>
<gene>
    <name type="primary">clpB</name>
    <name type="ordered locus">CE2613</name>
</gene>
<feature type="chain" id="PRO_0000191115" description="Chaperone protein ClpB">
    <location>
        <begin position="1"/>
        <end position="852"/>
    </location>
</feature>
<feature type="domain" description="Clp R" evidence="2">
    <location>
        <begin position="1"/>
        <end position="147"/>
    </location>
</feature>
<feature type="region of interest" description="Repeat 1" evidence="2">
    <location>
        <begin position="6"/>
        <end position="71"/>
    </location>
</feature>
<feature type="region of interest" description="Repeat 2" evidence="2">
    <location>
        <begin position="84"/>
        <end position="147"/>
    </location>
</feature>
<feature type="region of interest" description="NBD1" evidence="1">
    <location>
        <begin position="160"/>
        <end position="342"/>
    </location>
</feature>
<feature type="region of interest" description="Linker" evidence="1">
    <location>
        <begin position="343"/>
        <end position="548"/>
    </location>
</feature>
<feature type="region of interest" description="NBD2" evidence="1">
    <location>
        <begin position="558"/>
        <end position="756"/>
    </location>
</feature>
<feature type="region of interest" description="C-terminal" evidence="1">
    <location>
        <begin position="757"/>
        <end position="852"/>
    </location>
</feature>
<feature type="coiled-coil region" evidence="1">
    <location>
        <begin position="393"/>
        <end position="527"/>
    </location>
</feature>
<feature type="binding site" evidence="1">
    <location>
        <begin position="207"/>
        <end position="214"/>
    </location>
    <ligand>
        <name>ATP</name>
        <dbReference type="ChEBI" id="CHEBI:30616"/>
        <label>1</label>
    </ligand>
</feature>
<feature type="binding site" evidence="1">
    <location>
        <begin position="608"/>
        <end position="615"/>
    </location>
    <ligand>
        <name>ATP</name>
        <dbReference type="ChEBI" id="CHEBI:30616"/>
        <label>2</label>
    </ligand>
</feature>
<reference key="1">
    <citation type="journal article" date="2003" name="Genome Res.">
        <title>Comparative complete genome sequence analysis of the amino acid replacements responsible for the thermostability of Corynebacterium efficiens.</title>
        <authorList>
            <person name="Nishio Y."/>
            <person name="Nakamura Y."/>
            <person name="Kawarabayasi Y."/>
            <person name="Usuda Y."/>
            <person name="Kimura E."/>
            <person name="Sugimoto S."/>
            <person name="Matsui K."/>
            <person name="Yamagishi A."/>
            <person name="Kikuchi H."/>
            <person name="Ikeo K."/>
            <person name="Gojobori T."/>
        </authorList>
    </citation>
    <scope>NUCLEOTIDE SEQUENCE [LARGE SCALE GENOMIC DNA]</scope>
    <source>
        <strain>DSM 44549 / YS-314 / AJ 12310 / JCM 11189 / NBRC 100395</strain>
    </source>
</reference>
<accession>Q8FM94</accession>